<evidence type="ECO:0000255" key="1">
    <source>
        <dbReference type="HAMAP-Rule" id="MF_00222"/>
    </source>
</evidence>
<reference key="1">
    <citation type="submission" date="2006-12" db="EMBL/GenBank/DDBJ databases">
        <title>Complete sequence of chromosome 1 of Paracoccus denitrificans PD1222.</title>
        <authorList>
            <person name="Copeland A."/>
            <person name="Lucas S."/>
            <person name="Lapidus A."/>
            <person name="Barry K."/>
            <person name="Detter J.C."/>
            <person name="Glavina del Rio T."/>
            <person name="Hammon N."/>
            <person name="Israni S."/>
            <person name="Dalin E."/>
            <person name="Tice H."/>
            <person name="Pitluck S."/>
            <person name="Munk A.C."/>
            <person name="Brettin T."/>
            <person name="Bruce D."/>
            <person name="Han C."/>
            <person name="Tapia R."/>
            <person name="Gilna P."/>
            <person name="Schmutz J."/>
            <person name="Larimer F."/>
            <person name="Land M."/>
            <person name="Hauser L."/>
            <person name="Kyrpides N."/>
            <person name="Lykidis A."/>
            <person name="Spiro S."/>
            <person name="Richardson D.J."/>
            <person name="Moir J.W.B."/>
            <person name="Ferguson S.J."/>
            <person name="van Spanning R.J.M."/>
            <person name="Richardson P."/>
        </authorList>
    </citation>
    <scope>NUCLEOTIDE SEQUENCE [LARGE SCALE GENOMIC DNA]</scope>
    <source>
        <strain>Pd 1222</strain>
    </source>
</reference>
<proteinExistence type="inferred from homology"/>
<sequence length="282" mass="30207">MVDTLPTPKHAPLAGVIGWPVAHSRSPRLHGHWLERYGIAGHYVSLPVMPEHLAEVLRAMPHMGFVGANVTIPHKESVLALADVVTDRAALIGAANTLIFRADGKIHADNTDGYGFIANIRQHAPDWIPDLGPAAVIGAGGAARAVVASLLESGVPELRIANRTRIRAEQIRAEFGAKVVVYDWAQAGNMLEGAMTVVNATSMGMEGKPPLRVPLEALAPSTLVTDLVYTPLMTPFLAEAQARGCEVVDGLGMLLHQAAPGFERWFGQRPEVDDDLRRAVLA</sequence>
<accession>A1B5V3</accession>
<feature type="chain" id="PRO_0000325141" description="Shikimate dehydrogenase (NADP(+))">
    <location>
        <begin position="1"/>
        <end position="282"/>
    </location>
</feature>
<feature type="active site" description="Proton acceptor" evidence="1">
    <location>
        <position position="75"/>
    </location>
</feature>
<feature type="binding site" evidence="1">
    <location>
        <begin position="24"/>
        <end position="26"/>
    </location>
    <ligand>
        <name>shikimate</name>
        <dbReference type="ChEBI" id="CHEBI:36208"/>
    </ligand>
</feature>
<feature type="binding site" evidence="1">
    <location>
        <position position="71"/>
    </location>
    <ligand>
        <name>shikimate</name>
        <dbReference type="ChEBI" id="CHEBI:36208"/>
    </ligand>
</feature>
<feature type="binding site" evidence="1">
    <location>
        <position position="87"/>
    </location>
    <ligand>
        <name>NADP(+)</name>
        <dbReference type="ChEBI" id="CHEBI:58349"/>
    </ligand>
</feature>
<feature type="binding site" evidence="1">
    <location>
        <position position="96"/>
    </location>
    <ligand>
        <name>shikimate</name>
        <dbReference type="ChEBI" id="CHEBI:36208"/>
    </ligand>
</feature>
<feature type="binding site" evidence="1">
    <location>
        <position position="112"/>
    </location>
    <ligand>
        <name>shikimate</name>
        <dbReference type="ChEBI" id="CHEBI:36208"/>
    </ligand>
</feature>
<feature type="binding site" evidence="1">
    <location>
        <begin position="138"/>
        <end position="142"/>
    </location>
    <ligand>
        <name>NADP(+)</name>
        <dbReference type="ChEBI" id="CHEBI:58349"/>
    </ligand>
</feature>
<feature type="binding site" evidence="1">
    <location>
        <begin position="162"/>
        <end position="167"/>
    </location>
    <ligand>
        <name>NADP(+)</name>
        <dbReference type="ChEBI" id="CHEBI:58349"/>
    </ligand>
</feature>
<feature type="binding site" evidence="1">
    <location>
        <position position="227"/>
    </location>
    <ligand>
        <name>NADP(+)</name>
        <dbReference type="ChEBI" id="CHEBI:58349"/>
    </ligand>
</feature>
<feature type="binding site" evidence="1">
    <location>
        <position position="229"/>
    </location>
    <ligand>
        <name>shikimate</name>
        <dbReference type="ChEBI" id="CHEBI:36208"/>
    </ligand>
</feature>
<feature type="binding site" evidence="1">
    <location>
        <position position="250"/>
    </location>
    <ligand>
        <name>NADP(+)</name>
        <dbReference type="ChEBI" id="CHEBI:58349"/>
    </ligand>
</feature>
<keyword id="KW-0028">Amino-acid biosynthesis</keyword>
<keyword id="KW-0057">Aromatic amino acid biosynthesis</keyword>
<keyword id="KW-0521">NADP</keyword>
<keyword id="KW-0560">Oxidoreductase</keyword>
<keyword id="KW-1185">Reference proteome</keyword>
<name>AROE_PARDP</name>
<gene>
    <name evidence="1" type="primary">aroE</name>
    <name type="ordered locus">Pden_2813</name>
</gene>
<organism>
    <name type="scientific">Paracoccus denitrificans (strain Pd 1222)</name>
    <dbReference type="NCBI Taxonomy" id="318586"/>
    <lineage>
        <taxon>Bacteria</taxon>
        <taxon>Pseudomonadati</taxon>
        <taxon>Pseudomonadota</taxon>
        <taxon>Alphaproteobacteria</taxon>
        <taxon>Rhodobacterales</taxon>
        <taxon>Paracoccaceae</taxon>
        <taxon>Paracoccus</taxon>
    </lineage>
</organism>
<protein>
    <recommendedName>
        <fullName evidence="1">Shikimate dehydrogenase (NADP(+))</fullName>
        <shortName evidence="1">SDH</shortName>
        <ecNumber evidence="1">1.1.1.25</ecNumber>
    </recommendedName>
</protein>
<dbReference type="EC" id="1.1.1.25" evidence="1"/>
<dbReference type="EMBL" id="CP000489">
    <property type="protein sequence ID" value="ABL70897.1"/>
    <property type="molecule type" value="Genomic_DNA"/>
</dbReference>
<dbReference type="RefSeq" id="WP_011749088.1">
    <property type="nucleotide sequence ID" value="NC_008686.1"/>
</dbReference>
<dbReference type="SMR" id="A1B5V3"/>
<dbReference type="STRING" id="318586.Pden_2813"/>
<dbReference type="EnsemblBacteria" id="ABL70897">
    <property type="protein sequence ID" value="ABL70897"/>
    <property type="gene ID" value="Pden_2813"/>
</dbReference>
<dbReference type="GeneID" id="93451211"/>
<dbReference type="KEGG" id="pde:Pden_2813"/>
<dbReference type="eggNOG" id="COG0169">
    <property type="taxonomic scope" value="Bacteria"/>
</dbReference>
<dbReference type="HOGENOM" id="CLU_044063_2_0_5"/>
<dbReference type="OrthoDB" id="9792692at2"/>
<dbReference type="UniPathway" id="UPA00053">
    <property type="reaction ID" value="UER00087"/>
</dbReference>
<dbReference type="Proteomes" id="UP000000361">
    <property type="component" value="Chromosome 1"/>
</dbReference>
<dbReference type="GO" id="GO:0005829">
    <property type="term" value="C:cytosol"/>
    <property type="evidence" value="ECO:0007669"/>
    <property type="project" value="TreeGrafter"/>
</dbReference>
<dbReference type="GO" id="GO:0050661">
    <property type="term" value="F:NADP binding"/>
    <property type="evidence" value="ECO:0007669"/>
    <property type="project" value="InterPro"/>
</dbReference>
<dbReference type="GO" id="GO:0004764">
    <property type="term" value="F:shikimate 3-dehydrogenase (NADP+) activity"/>
    <property type="evidence" value="ECO:0007669"/>
    <property type="project" value="UniProtKB-UniRule"/>
</dbReference>
<dbReference type="GO" id="GO:0008652">
    <property type="term" value="P:amino acid biosynthetic process"/>
    <property type="evidence" value="ECO:0007669"/>
    <property type="project" value="UniProtKB-KW"/>
</dbReference>
<dbReference type="GO" id="GO:0009073">
    <property type="term" value="P:aromatic amino acid family biosynthetic process"/>
    <property type="evidence" value="ECO:0007669"/>
    <property type="project" value="UniProtKB-KW"/>
</dbReference>
<dbReference type="GO" id="GO:0009423">
    <property type="term" value="P:chorismate biosynthetic process"/>
    <property type="evidence" value="ECO:0007669"/>
    <property type="project" value="UniProtKB-UniRule"/>
</dbReference>
<dbReference type="GO" id="GO:0019632">
    <property type="term" value="P:shikimate metabolic process"/>
    <property type="evidence" value="ECO:0007669"/>
    <property type="project" value="InterPro"/>
</dbReference>
<dbReference type="CDD" id="cd01065">
    <property type="entry name" value="NAD_bind_Shikimate_DH"/>
    <property type="match status" value="1"/>
</dbReference>
<dbReference type="Gene3D" id="3.40.50.10860">
    <property type="entry name" value="Leucine Dehydrogenase, chain A, domain 1"/>
    <property type="match status" value="1"/>
</dbReference>
<dbReference type="Gene3D" id="3.40.50.720">
    <property type="entry name" value="NAD(P)-binding Rossmann-like Domain"/>
    <property type="match status" value="1"/>
</dbReference>
<dbReference type="HAMAP" id="MF_00222">
    <property type="entry name" value="Shikimate_DH_AroE"/>
    <property type="match status" value="1"/>
</dbReference>
<dbReference type="InterPro" id="IPR046346">
    <property type="entry name" value="Aminoacid_DH-like_N_sf"/>
</dbReference>
<dbReference type="InterPro" id="IPR036291">
    <property type="entry name" value="NAD(P)-bd_dom_sf"/>
</dbReference>
<dbReference type="InterPro" id="IPR041121">
    <property type="entry name" value="SDH_C"/>
</dbReference>
<dbReference type="InterPro" id="IPR011342">
    <property type="entry name" value="Shikimate_DH"/>
</dbReference>
<dbReference type="InterPro" id="IPR013708">
    <property type="entry name" value="Shikimate_DH-bd_N"/>
</dbReference>
<dbReference type="InterPro" id="IPR022893">
    <property type="entry name" value="Shikimate_DH_fam"/>
</dbReference>
<dbReference type="InterPro" id="IPR006151">
    <property type="entry name" value="Shikm_DH/Glu-tRNA_Rdtase"/>
</dbReference>
<dbReference type="NCBIfam" id="TIGR00507">
    <property type="entry name" value="aroE"/>
    <property type="match status" value="1"/>
</dbReference>
<dbReference type="NCBIfam" id="NF001312">
    <property type="entry name" value="PRK00258.1-4"/>
    <property type="match status" value="1"/>
</dbReference>
<dbReference type="PANTHER" id="PTHR21089:SF1">
    <property type="entry name" value="BIFUNCTIONAL 3-DEHYDROQUINATE DEHYDRATASE_SHIKIMATE DEHYDROGENASE, CHLOROPLASTIC"/>
    <property type="match status" value="1"/>
</dbReference>
<dbReference type="PANTHER" id="PTHR21089">
    <property type="entry name" value="SHIKIMATE DEHYDROGENASE"/>
    <property type="match status" value="1"/>
</dbReference>
<dbReference type="Pfam" id="PF18317">
    <property type="entry name" value="SDH_C"/>
    <property type="match status" value="1"/>
</dbReference>
<dbReference type="Pfam" id="PF01488">
    <property type="entry name" value="Shikimate_DH"/>
    <property type="match status" value="1"/>
</dbReference>
<dbReference type="Pfam" id="PF08501">
    <property type="entry name" value="Shikimate_dh_N"/>
    <property type="match status" value="1"/>
</dbReference>
<dbReference type="SUPFAM" id="SSF53223">
    <property type="entry name" value="Aminoacid dehydrogenase-like, N-terminal domain"/>
    <property type="match status" value="1"/>
</dbReference>
<dbReference type="SUPFAM" id="SSF51735">
    <property type="entry name" value="NAD(P)-binding Rossmann-fold domains"/>
    <property type="match status" value="1"/>
</dbReference>
<comment type="function">
    <text evidence="1">Involved in the biosynthesis of the chorismate, which leads to the biosynthesis of aromatic amino acids. Catalyzes the reversible NADPH linked reduction of 3-dehydroshikimate (DHSA) to yield shikimate (SA).</text>
</comment>
<comment type="catalytic activity">
    <reaction evidence="1">
        <text>shikimate + NADP(+) = 3-dehydroshikimate + NADPH + H(+)</text>
        <dbReference type="Rhea" id="RHEA:17737"/>
        <dbReference type="ChEBI" id="CHEBI:15378"/>
        <dbReference type="ChEBI" id="CHEBI:16630"/>
        <dbReference type="ChEBI" id="CHEBI:36208"/>
        <dbReference type="ChEBI" id="CHEBI:57783"/>
        <dbReference type="ChEBI" id="CHEBI:58349"/>
        <dbReference type="EC" id="1.1.1.25"/>
    </reaction>
</comment>
<comment type="pathway">
    <text evidence="1">Metabolic intermediate biosynthesis; chorismate biosynthesis; chorismate from D-erythrose 4-phosphate and phosphoenolpyruvate: step 4/7.</text>
</comment>
<comment type="subunit">
    <text evidence="1">Homodimer.</text>
</comment>
<comment type="similarity">
    <text evidence="1">Belongs to the shikimate dehydrogenase family.</text>
</comment>